<accession>B1W417</accession>
<comment type="function">
    <text evidence="1">Catalyzes the GTP-dependent ribosomal translocation step during translation elongation. During this step, the ribosome changes from the pre-translocational (PRE) to the post-translocational (POST) state as the newly formed A-site-bound peptidyl-tRNA and P-site-bound deacylated tRNA move to the P and E sites, respectively. Catalyzes the coordinated movement of the two tRNA molecules, the mRNA and conformational changes in the ribosome.</text>
</comment>
<comment type="subcellular location">
    <subcellularLocation>
        <location evidence="1">Cytoplasm</location>
    </subcellularLocation>
</comment>
<comment type="similarity">
    <text evidence="1">Belongs to the TRAFAC class translation factor GTPase superfamily. Classic translation factor GTPase family. EF-G/EF-2 subfamily.</text>
</comment>
<gene>
    <name evidence="1" type="primary">fusA</name>
    <name type="ordered locus">SGR_2844</name>
</gene>
<evidence type="ECO:0000255" key="1">
    <source>
        <dbReference type="HAMAP-Rule" id="MF_00054"/>
    </source>
</evidence>
<sequence length="709" mass="77574">MATTSLDLAKVRNIGIMAHIDAGKTTTTERILFYTGVSYKIGEVHDGAATMDWMEQEQERGITITSAATTCHWPLNDVDHTINIIDTPGHVDFTVEVERSLRVLDGAVTVFDGVAGVEPQSETVWRQADRYGVPRICFVNKLDRTGADFFRCVDMIVDRLGATPIVMQLPIGAEADFTGVVDLVSMKAFVYPEEAAKGEMYNVVDIPENLQESAAEWRGKLLEAVAENDDAMMELYLEGNEPTQEQLHDAIRRITLASKGSADSVTVTPVFCGTAFKNKGVQPLLDAVVRYLPSPLDVEAIEGHDVKDPEKVIARKPSDDEPFSGLAFKIASDPHLGKLTFVRIYSGRLEAGTAVLNSVKGKKERIGKIYRMHANKREEIASVGAGDIIAVMGLKQTTTGETLCDDKNPVILESMDFPAPVIQVAIEPKSKGDQEKLGVAIQRLSEEDPSFQVHSDEETGQTIIGGMGELHLEVLVDRMKREFRVEANVGKPQVAYRETIRKAVERIDYTHKKQTGGTGQFAKVQIALEPIEGGDASYEFVNKVTGGRIPREYIPSVDAGAQEAMQFGILAGYEMVGVRVTLLDGGYHEVDSSELAFKIAGSQAFKEGARKASPVLLEPMMAVEVTTPEDYMGDVIGDLNSRRGQIQAMEERSGARVVKGLVPLSEMFGYVGDLRSKTSGRASYSMQFDSYAEVPRNVAEEIIAKAKGE</sequence>
<proteinExistence type="inferred from homology"/>
<dbReference type="EMBL" id="AP009493">
    <property type="protein sequence ID" value="BAG19673.1"/>
    <property type="molecule type" value="Genomic_DNA"/>
</dbReference>
<dbReference type="RefSeq" id="WP_012379465.1">
    <property type="nucleotide sequence ID" value="NC_010572.1"/>
</dbReference>
<dbReference type="SMR" id="B1W417"/>
<dbReference type="KEGG" id="sgr:SGR_2844"/>
<dbReference type="PATRIC" id="fig|455632.4.peg.2906"/>
<dbReference type="eggNOG" id="COG0480">
    <property type="taxonomic scope" value="Bacteria"/>
</dbReference>
<dbReference type="HOGENOM" id="CLU_002794_4_1_11"/>
<dbReference type="Proteomes" id="UP000001685">
    <property type="component" value="Chromosome"/>
</dbReference>
<dbReference type="GO" id="GO:0005737">
    <property type="term" value="C:cytoplasm"/>
    <property type="evidence" value="ECO:0007669"/>
    <property type="project" value="UniProtKB-SubCell"/>
</dbReference>
<dbReference type="GO" id="GO:0005525">
    <property type="term" value="F:GTP binding"/>
    <property type="evidence" value="ECO:0007669"/>
    <property type="project" value="UniProtKB-UniRule"/>
</dbReference>
<dbReference type="GO" id="GO:0003924">
    <property type="term" value="F:GTPase activity"/>
    <property type="evidence" value="ECO:0007669"/>
    <property type="project" value="InterPro"/>
</dbReference>
<dbReference type="GO" id="GO:0003746">
    <property type="term" value="F:translation elongation factor activity"/>
    <property type="evidence" value="ECO:0007669"/>
    <property type="project" value="UniProtKB-UniRule"/>
</dbReference>
<dbReference type="GO" id="GO:0032790">
    <property type="term" value="P:ribosome disassembly"/>
    <property type="evidence" value="ECO:0007669"/>
    <property type="project" value="TreeGrafter"/>
</dbReference>
<dbReference type="CDD" id="cd01886">
    <property type="entry name" value="EF-G"/>
    <property type="match status" value="1"/>
</dbReference>
<dbReference type="CDD" id="cd16262">
    <property type="entry name" value="EFG_III"/>
    <property type="match status" value="1"/>
</dbReference>
<dbReference type="CDD" id="cd01434">
    <property type="entry name" value="EFG_mtEFG1_IV"/>
    <property type="match status" value="1"/>
</dbReference>
<dbReference type="CDD" id="cd03713">
    <property type="entry name" value="EFG_mtEFG_C"/>
    <property type="match status" value="1"/>
</dbReference>
<dbReference type="CDD" id="cd04088">
    <property type="entry name" value="EFG_mtEFG_II"/>
    <property type="match status" value="1"/>
</dbReference>
<dbReference type="FunFam" id="2.40.30.10:FF:000006">
    <property type="entry name" value="Elongation factor G"/>
    <property type="match status" value="1"/>
</dbReference>
<dbReference type="FunFam" id="3.30.230.10:FF:000003">
    <property type="entry name" value="Elongation factor G"/>
    <property type="match status" value="1"/>
</dbReference>
<dbReference type="FunFam" id="3.30.70.240:FF:000001">
    <property type="entry name" value="Elongation factor G"/>
    <property type="match status" value="1"/>
</dbReference>
<dbReference type="FunFam" id="3.30.70.870:FF:000001">
    <property type="entry name" value="Elongation factor G"/>
    <property type="match status" value="1"/>
</dbReference>
<dbReference type="FunFam" id="3.40.50.300:FF:000029">
    <property type="entry name" value="Elongation factor G"/>
    <property type="match status" value="1"/>
</dbReference>
<dbReference type="Gene3D" id="3.30.230.10">
    <property type="match status" value="1"/>
</dbReference>
<dbReference type="Gene3D" id="3.30.70.240">
    <property type="match status" value="1"/>
</dbReference>
<dbReference type="Gene3D" id="3.30.70.870">
    <property type="entry name" value="Elongation Factor G (Translational Gtpase), domain 3"/>
    <property type="match status" value="1"/>
</dbReference>
<dbReference type="Gene3D" id="3.40.50.300">
    <property type="entry name" value="P-loop containing nucleotide triphosphate hydrolases"/>
    <property type="match status" value="1"/>
</dbReference>
<dbReference type="Gene3D" id="2.40.30.10">
    <property type="entry name" value="Translation factors"/>
    <property type="match status" value="1"/>
</dbReference>
<dbReference type="HAMAP" id="MF_00054_B">
    <property type="entry name" value="EF_G_EF_2_B"/>
    <property type="match status" value="1"/>
</dbReference>
<dbReference type="InterPro" id="IPR053905">
    <property type="entry name" value="EF-G-like_DII"/>
</dbReference>
<dbReference type="InterPro" id="IPR041095">
    <property type="entry name" value="EFG_II"/>
</dbReference>
<dbReference type="InterPro" id="IPR009022">
    <property type="entry name" value="EFG_III"/>
</dbReference>
<dbReference type="InterPro" id="IPR035647">
    <property type="entry name" value="EFG_III/V"/>
</dbReference>
<dbReference type="InterPro" id="IPR047872">
    <property type="entry name" value="EFG_IV"/>
</dbReference>
<dbReference type="InterPro" id="IPR035649">
    <property type="entry name" value="EFG_V"/>
</dbReference>
<dbReference type="InterPro" id="IPR000640">
    <property type="entry name" value="EFG_V-like"/>
</dbReference>
<dbReference type="InterPro" id="IPR031157">
    <property type="entry name" value="G_TR_CS"/>
</dbReference>
<dbReference type="InterPro" id="IPR027417">
    <property type="entry name" value="P-loop_NTPase"/>
</dbReference>
<dbReference type="InterPro" id="IPR020568">
    <property type="entry name" value="Ribosomal_Su5_D2-typ_SF"/>
</dbReference>
<dbReference type="InterPro" id="IPR014721">
    <property type="entry name" value="Ribsml_uS5_D2-typ_fold_subgr"/>
</dbReference>
<dbReference type="InterPro" id="IPR005225">
    <property type="entry name" value="Small_GTP-bd"/>
</dbReference>
<dbReference type="InterPro" id="IPR000795">
    <property type="entry name" value="T_Tr_GTP-bd_dom"/>
</dbReference>
<dbReference type="InterPro" id="IPR009000">
    <property type="entry name" value="Transl_B-barrel_sf"/>
</dbReference>
<dbReference type="InterPro" id="IPR004540">
    <property type="entry name" value="Transl_elong_EFG/EF2"/>
</dbReference>
<dbReference type="InterPro" id="IPR005517">
    <property type="entry name" value="Transl_elong_EFG/EF2_IV"/>
</dbReference>
<dbReference type="NCBIfam" id="TIGR00484">
    <property type="entry name" value="EF-G"/>
    <property type="match status" value="1"/>
</dbReference>
<dbReference type="NCBIfam" id="NF009379">
    <property type="entry name" value="PRK12740.1-3"/>
    <property type="match status" value="1"/>
</dbReference>
<dbReference type="NCBIfam" id="NF009381">
    <property type="entry name" value="PRK12740.1-5"/>
    <property type="match status" value="1"/>
</dbReference>
<dbReference type="NCBIfam" id="TIGR00231">
    <property type="entry name" value="small_GTP"/>
    <property type="match status" value="1"/>
</dbReference>
<dbReference type="PANTHER" id="PTHR43261:SF1">
    <property type="entry name" value="RIBOSOME-RELEASING FACTOR 2, MITOCHONDRIAL"/>
    <property type="match status" value="1"/>
</dbReference>
<dbReference type="PANTHER" id="PTHR43261">
    <property type="entry name" value="TRANSLATION ELONGATION FACTOR G-RELATED"/>
    <property type="match status" value="1"/>
</dbReference>
<dbReference type="Pfam" id="PF22042">
    <property type="entry name" value="EF-G_D2"/>
    <property type="match status" value="1"/>
</dbReference>
<dbReference type="Pfam" id="PF00679">
    <property type="entry name" value="EFG_C"/>
    <property type="match status" value="1"/>
</dbReference>
<dbReference type="Pfam" id="PF14492">
    <property type="entry name" value="EFG_III"/>
    <property type="match status" value="1"/>
</dbReference>
<dbReference type="Pfam" id="PF03764">
    <property type="entry name" value="EFG_IV"/>
    <property type="match status" value="1"/>
</dbReference>
<dbReference type="Pfam" id="PF00009">
    <property type="entry name" value="GTP_EFTU"/>
    <property type="match status" value="1"/>
</dbReference>
<dbReference type="PRINTS" id="PR00315">
    <property type="entry name" value="ELONGATNFCT"/>
</dbReference>
<dbReference type="SMART" id="SM00838">
    <property type="entry name" value="EFG_C"/>
    <property type="match status" value="1"/>
</dbReference>
<dbReference type="SMART" id="SM00889">
    <property type="entry name" value="EFG_IV"/>
    <property type="match status" value="1"/>
</dbReference>
<dbReference type="SUPFAM" id="SSF54980">
    <property type="entry name" value="EF-G C-terminal domain-like"/>
    <property type="match status" value="2"/>
</dbReference>
<dbReference type="SUPFAM" id="SSF52540">
    <property type="entry name" value="P-loop containing nucleoside triphosphate hydrolases"/>
    <property type="match status" value="1"/>
</dbReference>
<dbReference type="SUPFAM" id="SSF54211">
    <property type="entry name" value="Ribosomal protein S5 domain 2-like"/>
    <property type="match status" value="1"/>
</dbReference>
<dbReference type="SUPFAM" id="SSF50447">
    <property type="entry name" value="Translation proteins"/>
    <property type="match status" value="1"/>
</dbReference>
<dbReference type="PROSITE" id="PS00301">
    <property type="entry name" value="G_TR_1"/>
    <property type="match status" value="1"/>
</dbReference>
<dbReference type="PROSITE" id="PS51722">
    <property type="entry name" value="G_TR_2"/>
    <property type="match status" value="1"/>
</dbReference>
<feature type="chain" id="PRO_1000091764" description="Elongation factor G">
    <location>
        <begin position="1"/>
        <end position="709"/>
    </location>
</feature>
<feature type="domain" description="tr-type G">
    <location>
        <begin position="9"/>
        <end position="296"/>
    </location>
</feature>
<feature type="binding site" evidence="1">
    <location>
        <begin position="18"/>
        <end position="25"/>
    </location>
    <ligand>
        <name>GTP</name>
        <dbReference type="ChEBI" id="CHEBI:37565"/>
    </ligand>
</feature>
<feature type="binding site" evidence="1">
    <location>
        <begin position="86"/>
        <end position="90"/>
    </location>
    <ligand>
        <name>GTP</name>
        <dbReference type="ChEBI" id="CHEBI:37565"/>
    </ligand>
</feature>
<feature type="binding site" evidence="1">
    <location>
        <begin position="140"/>
        <end position="143"/>
    </location>
    <ligand>
        <name>GTP</name>
        <dbReference type="ChEBI" id="CHEBI:37565"/>
    </ligand>
</feature>
<keyword id="KW-0963">Cytoplasm</keyword>
<keyword id="KW-0251">Elongation factor</keyword>
<keyword id="KW-0342">GTP-binding</keyword>
<keyword id="KW-0547">Nucleotide-binding</keyword>
<keyword id="KW-0648">Protein biosynthesis</keyword>
<protein>
    <recommendedName>
        <fullName evidence="1">Elongation factor G</fullName>
        <shortName evidence="1">EF-G</shortName>
    </recommendedName>
</protein>
<reference key="1">
    <citation type="journal article" date="2008" name="J. Bacteriol.">
        <title>Genome sequence of the streptomycin-producing microorganism Streptomyces griseus IFO 13350.</title>
        <authorList>
            <person name="Ohnishi Y."/>
            <person name="Ishikawa J."/>
            <person name="Hara H."/>
            <person name="Suzuki H."/>
            <person name="Ikenoya M."/>
            <person name="Ikeda H."/>
            <person name="Yamashita A."/>
            <person name="Hattori M."/>
            <person name="Horinouchi S."/>
        </authorList>
    </citation>
    <scope>NUCLEOTIDE SEQUENCE [LARGE SCALE GENOMIC DNA]</scope>
    <source>
        <strain>JCM 4626 / CBS 651.72 / NBRC 13350 / KCC S-0626 / ISP 5235</strain>
    </source>
</reference>
<name>EFG_STRGG</name>
<organism>
    <name type="scientific">Streptomyces griseus subsp. griseus (strain JCM 4626 / CBS 651.72 / NBRC 13350 / KCC S-0626 / ISP 5235)</name>
    <dbReference type="NCBI Taxonomy" id="455632"/>
    <lineage>
        <taxon>Bacteria</taxon>
        <taxon>Bacillati</taxon>
        <taxon>Actinomycetota</taxon>
        <taxon>Actinomycetes</taxon>
        <taxon>Kitasatosporales</taxon>
        <taxon>Streptomycetaceae</taxon>
        <taxon>Streptomyces</taxon>
    </lineage>
</organism>